<sequence>MLTHDLTKNLGRPSFLPKELTISDSQVQRLKTPCFEEIIRSFLNKRKPKQNWQLSLEIEEKLSNPTILDIFKTIRTTEETIISDESSRDFFIYSLLKIDCCIKGNLFSYYSEMDRTNIKDIIIGKGLKNNNNNIILGNSIFFKKIVEDFLTMAFERFSWYCENKSTDLLFFICVMSESNERLKEFFNKFQDYHHHHNQSKTAEHYKISKSLNSLPFSISNGVISNGVNPTIKIQWFLKFVELNLKNPIVYQLFDYTIINYPFISNLNILVGPILLNIFNNDNIKIYEDNNNNNNNNNNNNNNNNNNNSTIVDKFNLTLELKSKLAFSVYKRKLAICAVTLPILVLHLQKDPIGFLKYYDEFIKSSPESKSLFNHSISLHLSNDTKKMFNLLPYRNRIDLGWESFIVNKLTTADKINILSTYDETYQDVKAIIICSLNVESYALLSLESKLSDQFLINVFNQQCRLPNNYNFSGVITSFSTIEREYVSRLKNSIEQEAIKKKQLIVKQIEMNSEIYENYFRIVNVMVEALLNQNPSLNSIIECVGTDLGGSLEQDNQYMDTLPNLVLFSHLLRRIATSNLNSSYLLKKDSKGNNRLNLDLSNLAMFYNSKNSFWQEIRGPYDSFLREFIKNLLAKYVEIKSDFKYLDYHYFESLTIILLEMKRRYNCIPSDYRVSNKPVKIVEFKDFIKKFEEKESQYNDLLLVKEYLERKFSFNFSSQFDKNWKTSKRLKLLRQLIKSTKSLYGHYIQDDESIKFLLHFAIVNKTLFFHAIFDYYYLNSSDQTNSKQLNLDQCLKSTREFLKRLIESDSSIQLNDIFKKITEITDINYVREIEPIYNYFKGNGEPYKKELEEQIQKFIDNATFFFGVRKYLPHIEKFIESLDFIVITDFNKKKAKCEEIIKSVFEKNTTIAGANDALILLKSIMKDINFIQLPFFSLNIKDIIEWFSSFTDFKNFNIQVEIASNNYNDSYSAQILDYTLFCRNQFTELVQYSIDSTKDEKPKQMEFSKFFELINQIIPVSGYLSAVNKISSAINNLSNVKVLFKSGNFNEQGTLQNAEMATNSKSKFTSETYNTNNNSTNGSNWWVVSENGFELAQDKLENSYRGIDIFSKFDDDDNNNSNNNNNNNNNNNNNKKIIDNKKTFDTFRIIFKLFKKIHSLHNELYKICHPKFMALQSIQVACDLETLKKEKRHLRNSIKVWKDFISSLPKNLLFLRAPGVSSLYSKLKLTFENKFNNNNNNNNNNIQQQQQQFDLFLNDLVLDLFPSIKYCFYEYPQIINMKLLKNQIESTTNQLLNEKTNSKILIDDEIVSGCFIEKFLKELIRNIKQNLLYIEDDEEEVEEEVGGVEIGQLKNQPIGVPPPNVNKFDLINSFELVNIECNDDLFNSLMELNDSQLPHPSQIFYANSFDADFPFFKCLVEKFSESIFFLIGTPNKKDEFINWMSVHFSNNTMSKLAKVYVISIGDDTHTKDVFSFLSPYSGKNNNIGNTNNSWESFKVLWNKTKVQNGIESLNLVSGGTGTGKSHFIKSEIKAKNGGGGGRNLEIEKPNEHTVLVRPGFIIDPLIKKIKALKDATNFFIHFNISCYADFQEFSQFFYPLISFGYIFGKQDGELCSIPTGCLLTIYVELGDPLGSDYRKNENNTIQSIEYLKYVKTSIPLIFHLSDTEMSKKYLLAEWVSGEAEWRAFAFSSDHCSFYQKATVEMGKDVKLSQYLDYINQMFKRNFPTIDINYLFDKTKYPFRKNFFLMLNERLKFLETYYEFYLVICDHDFQNSNTVLQDSLLTYQELYEVFLVECAQLANPEFSQQKTIWEKPPLITNRSVVKVTKDRSSSSSSSYSGGGSSINNDNISSKQVDFIDLSNNNGLTKSGSKISNYNNQIDRLIESKIKKLPTYITLDKANENIRLFNTKIASSFGIQSRTNIVTDLANQYGFVLTPELSLRLFILNNRIQHHRSMVLTGDTGVGKTMLLIFYSLLINAGLNAIPDIIFEIKEVIIKFARTLEGFSFSQEIVNLNVDFSIDKILLASKEIFNFVPKHLKENNGENNPVQQLQQQNDGDKQQNPQQPQQQQQQQQQQQQQQQQQQQQQQQPKQQQQQQLKHKNSETSSPLFKHQTSFIKEVEEIIVKIVEAYQLIDISRSPSIQDIMKKKRTSPIATYLNNNKTVKLDSLLEQLKEICTIPFKRLFTRIIMNKKISGKDFKAIVNTIIKESNELKKIDQDLKMVVFIDEYNTSCEESLSLINEIFVDGTFDGEYCLPDNIFWIGAMNPLVETVGNAINYTGESLSSSSSGNNLFSSSSSITSSSTDITTSNNYEFVVQETPPPLKQLELDYGSLSVSNESSFCASLIRLNESGIIPAYLNVDLDYPNQVGIDINQMIIIGQKCLRKEKQARTHVSFRDIIRAIDLYQFFVQEIGVEILKTINENENEKISPIQTHWLALICSVSMTYIHRLNPDNRSKMVNAFNEYIGKFSGNNLNSFKKSSSSSNNNNGDYVTEIFKSIICGVSKQTTIPNGVARTESLQLNIFFTLVSIYTCIPICIVGPPGCSKTLSFSIVNDNLNSHGPTSNRPKLYSFLKSTQPFRYQCNNHTSDTEIKEVLDKAIRRGDIITDRVRMVVHLDEAGLVNENTSPMKIMHDYLDKGTRSKTLITIIILSNKILDAAKTNRMLLLVHPKEVSIQDQHSLVKGCLFGRIDKLTDYEENICTALCNAFSEINTHDSSSLQDIDNSNINNINKNNGNTISDISDIHPKLNKRIFAQRDFVFFLRHLRRAFEIKGKLTPEDLLVSLERNFIGTKIFKPHLQSFFKHLGFESDQLLAHDNTIVRIKQSLQDKLDINTDINSQGFRYMMLLDPTDSETSLLILKEIGVEHTVIRVGDFENDQTTESLSHTVSEIKIKMSQGGTVVLVNSQSIQACFYDVFNRYFTIYQQDDEKSFLAHLSFGINSMFCPVHPDFRVIVHLPLSRLNVTQYPWLNRFEKYILSMDQLLSYSLSKASLENIQNYHDHQSNTKAFFKNLLVSAQDFVDEIHIGKLNGSLLFGYTKSTIQSLVYQAFKDNSNFSPYSISKEDLKKMSLLPPDQQINPSTLLNLKLLQIARPESLYKCTKSLPKSYVEQYLSNQEHFNVYLFLKNLVESFSKNQNQQQQQQQQQELEVDSEQQQQQQQQQQQQQQQQQQQQQQQQQQQQQQQQQQQQQQQQSKWMVFTRTSFSLHSIRDSDKNDKFLLLLESNIKVNRNGGSKNLFKVLQLHTFKSKVKCSKEIIDFCTSEEQMVIIIIADMLVVTNNQINFVHEVFDQHANRANKLLVFISHFPPEFSISSQNNINSIFLNNTEYIYIDSLGIKIDNSLISDSGIKSDLEKSNNNNNNNNNDNSGNNSGNEIDGSSNGDNNNNNNNNNNSGEMKFDIRGWISKVYGITDNKPLDETTFLESMFFKYLYQISSSMANSQLMGYIEPKELRVEESQFYSNATKRVEYIKTIFENNNSWVKCIIDQFLKTWNGTNLITNIIADVSSDIVSTKSTQSFFESIISSIKSFFYPVISQIIKHLINHYSFLSIYEVKPNSMEQKMVEKFIISANSLKISDSVEERFEPIRILPPIIRKVRSELLLYDSISTVINQLFDQALSTCKFMSNYGFLYKEFYQLVSKHPIKPLLDYIVSEEPLLERFNNDFIIRTLKFEKTVSKFFFNLIDSFKGRFVTSSSSPSSSSKKDNINSHPILELWVTSHFEHRTLFYLKNILLPIINLKGVDLISELLKIPLNNNINRTIEDYKRLIVDFSFNLLYNRLLVLLDQVKCNDSYNEDIFLNWISVVREVLNISKTISNVLKDLRKISNGSNNDDSYLKAIQVFISYSILMDSCINSINFIKNEDGTISTTPKNTTKSSSPSVSTLHSMVKIYYNFFNKEFKSDSFNVLFNNLIEFKKEKESKLIGDSYSSILQKTCLLDILDPIATLSRENFSQFLRVLQDPKRNNKIEIPIGWICSVIGEYINLEDNYQFLREKVNEICCKSCEEYYFPPLVSKPTGLSFKFLGITEKSYIHSFKLLEDSIYYAELNRIKSEELNSLCSSHLREKFLREPFSNIILESINTQIIEKFADLLNSNIENAKEVLEKTKILKGTLQSILVAPENPNGKILKLINFYHMTLINHLKESTMATLLRDEAFLSTFGLRLHLLDSDKISGVDASQRGVNLSNKTEVDFSQLRFIYDSSNNSYGVLFKKIEQLINSSDKPEFEKLTETLNTPDCQGLFRASLFIILYQYYLDGLDCSAFKYLFESKEQDSTRKFFDLQNFTEYYLPFIYPDQKLNKNIGVHKLLMRQENKEREDITAAQITINSIAISIGSNSNTFLYNLTRHIQTVAGQYFPACDVGNIFRDCAMIYLDGQDDHTVTMGYDVLYKYIVSCCSWSAFTFTVSVQPRYTEYLLKPQIHFVSKLDKKDHVSLTNYLWNRALTSINEIIRNPELSSSLIEPSQYISEFLYQIWLDGHTLNNSQQTQHFRSHFANTTQVTNYEKYLCNVLTKIKKENESRKSHLMRIFAQRTIVSSKNKEIQMNINSIRSDFVRSYERPYFTFEKINQFCSSSNGSSKNFEVLTFMSNQIQKICLSKHFTPLVNFIVLFHQFLKFRLQENQFNFNFNQCVQILLDKQYETEESIKPLRLAWTHFTNAWKSVIKEMNIIEGGCAQKPEYEKVAFPIHDETPMSVILFDSDSNGSGVILNLINGWVSHTQSPCLNLRNDVPMSPLFKTIAEGFIPKGVTYDISDLPEGENYLLLGSDFEPNDYHQFIYRLFSQYQTFDKETMSPDFLSIQNRVINRFFAGKGVAGILENYSKRFPFQKVISEQDSVVKKKLASLLLDDEIQSLSNLVRNLYSLIQKLPEIYFKDIGHSYLKIHFENTLSARQNYLDDFSQELSTLVSNIINLTNEQQSIDVNQSIFHFRNSITTFVPLDLAKQLSINMVGTISIMLINSSLKQKKLYRNFCPEPKIIDGKYIEFFDRFKSNIIEKAKNEADNLNFLRNLCEYIREVHSKLVSNDVLKEISVSTSESITLAQIIQKRIPEFSFDKEVISKKSFCLNGTPTSYYRILIKTITDIYNHINPMIQNKKNTVYSEIFTNHFNSINSEEEIKQINIDSIRTSNNSSPNLIQKINEQLDNNNNNNNNNNNNNNNNNNNIDHGDDNNDGESESDIEDYENINSTCGKIKIIKNTTRKIDQIDNHPFKHYLYYWIRYLSQFCELLNVEPLNNYNNNNNDFKIFSLFKLFKLQSFEQNYDQNSPIIINRLDKKLSKGLITSISPMETMIHILNRLSKLDSNIKQLFNWKFKIICDECKENTESSGFIKLTLDLTNINETNRSIKSLLMSTLLYSIKIRNCNHNKSDIKLVESPEYIFIEVERFKKGLPFNSSIINFEKNISISELLGNFSKDINGLYNIQSILSYGSRNDEFDFITSNEGQYYHLTSSSCVKTLNEYSFNAIIESLNNNCNFIILKKGGYIKTSHISDPVDPSLLNKPPIPSSDNEEEEEDDDDDEVNEDEYENGNEDEDEDEDEDEDEDEDEDEDEDEDEDEDEDEDEDEDEDEDEDEEYEDEDEDEDIIGDDAEVEKENKNGFSHLESLQITPIPHDKDEEQPEKPQQQEIHQQPEKPQQPEKPQELQSTETPGQEVSVDYKILYDRKAFKEFLYGGFEKFTEDLKLQILDAGINCFSVLLNLKSEDWSKFSFLQLPKRNQLVNSYKKIHNEAIKKEYPFESPFDIDDQKAYEQFLKDIVNDEKTIMDLVEAGFDSFTSLIPSDDGGWEEVSLNLQEILKPATCFNLINQLKLVGKA</sequence>
<feature type="chain" id="PRO_0000346913" description="Putative uncharacterized transmembrane protein DDB_G0290641">
    <location>
        <begin position="1"/>
        <end position="5801"/>
    </location>
</feature>
<feature type="region of interest" description="Disordered" evidence="1">
    <location>
        <begin position="1114"/>
        <end position="1136"/>
    </location>
</feature>
<feature type="region of interest" description="Disordered" evidence="1">
    <location>
        <begin position="1827"/>
        <end position="1846"/>
    </location>
</feature>
<feature type="region of interest" description="Disordered" evidence="1">
    <location>
        <begin position="2040"/>
        <end position="2109"/>
    </location>
</feature>
<feature type="region of interest" description="Disordered" evidence="1">
    <location>
        <begin position="3351"/>
        <end position="3392"/>
    </location>
</feature>
<feature type="region of interest" description="Disordered" evidence="1">
    <location>
        <begin position="5134"/>
        <end position="5168"/>
    </location>
</feature>
<feature type="region of interest" description="Disordered" evidence="1">
    <location>
        <begin position="5478"/>
        <end position="5573"/>
    </location>
</feature>
<feature type="region of interest" description="Disordered" evidence="1">
    <location>
        <begin position="5600"/>
        <end position="5638"/>
    </location>
</feature>
<feature type="compositionally biased region" description="Low complexity" evidence="1">
    <location>
        <begin position="1118"/>
        <end position="1134"/>
    </location>
</feature>
<feature type="compositionally biased region" description="Low complexity" evidence="1">
    <location>
        <begin position="1831"/>
        <end position="1846"/>
    </location>
</feature>
<feature type="compositionally biased region" description="Low complexity" evidence="1">
    <location>
        <begin position="2048"/>
        <end position="2096"/>
    </location>
</feature>
<feature type="compositionally biased region" description="Low complexity" evidence="1">
    <location>
        <begin position="3353"/>
        <end position="3392"/>
    </location>
</feature>
<feature type="compositionally biased region" description="Low complexity" evidence="1">
    <location>
        <begin position="5135"/>
        <end position="5153"/>
    </location>
</feature>
<feature type="compositionally biased region" description="Acidic residues" evidence="1">
    <location>
        <begin position="5496"/>
        <end position="5573"/>
    </location>
</feature>
<feature type="compositionally biased region" description="Basic and acidic residues" evidence="1">
    <location>
        <begin position="5617"/>
        <end position="5629"/>
    </location>
</feature>
<keyword id="KW-1185">Reference proteome</keyword>
<comment type="sequence caution" evidence="2">
    <conflict type="erroneous gene model prediction">
        <sequence resource="EMBL-CDS" id="EAL62118"/>
    </conflict>
</comment>
<comment type="sequence caution" evidence="2">
    <conflict type="erroneous gene model prediction">
        <sequence resource="EMBL-CDS" id="EAL62181"/>
    </conflict>
</comment>
<reference key="1">
    <citation type="journal article" date="2005" name="Nature">
        <title>The genome of the social amoeba Dictyostelium discoideum.</title>
        <authorList>
            <person name="Eichinger L."/>
            <person name="Pachebat J.A."/>
            <person name="Gloeckner G."/>
            <person name="Rajandream M.A."/>
            <person name="Sucgang R."/>
            <person name="Berriman M."/>
            <person name="Song J."/>
            <person name="Olsen R."/>
            <person name="Szafranski K."/>
            <person name="Xu Q."/>
            <person name="Tunggal B."/>
            <person name="Kummerfeld S."/>
            <person name="Madera M."/>
            <person name="Konfortov B.A."/>
            <person name="Rivero F."/>
            <person name="Bankier A.T."/>
            <person name="Lehmann R."/>
            <person name="Hamlin N."/>
            <person name="Davies R."/>
            <person name="Gaudet P."/>
            <person name="Fey P."/>
            <person name="Pilcher K."/>
            <person name="Chen G."/>
            <person name="Saunders D."/>
            <person name="Sodergren E.J."/>
            <person name="Davis P."/>
            <person name="Kerhornou A."/>
            <person name="Nie X."/>
            <person name="Hall N."/>
            <person name="Anjard C."/>
            <person name="Hemphill L."/>
            <person name="Bason N."/>
            <person name="Farbrother P."/>
            <person name="Desany B."/>
            <person name="Just E."/>
            <person name="Morio T."/>
            <person name="Rost R."/>
            <person name="Churcher C.M."/>
            <person name="Cooper J."/>
            <person name="Haydock S."/>
            <person name="van Driessche N."/>
            <person name="Cronin A."/>
            <person name="Goodhead I."/>
            <person name="Muzny D.M."/>
            <person name="Mourier T."/>
            <person name="Pain A."/>
            <person name="Lu M."/>
            <person name="Harper D."/>
            <person name="Lindsay R."/>
            <person name="Hauser H."/>
            <person name="James K.D."/>
            <person name="Quiles M."/>
            <person name="Madan Babu M."/>
            <person name="Saito T."/>
            <person name="Buchrieser C."/>
            <person name="Wardroper A."/>
            <person name="Felder M."/>
            <person name="Thangavelu M."/>
            <person name="Johnson D."/>
            <person name="Knights A."/>
            <person name="Loulseged H."/>
            <person name="Mungall K.L."/>
            <person name="Oliver K."/>
            <person name="Price C."/>
            <person name="Quail M.A."/>
            <person name="Urushihara H."/>
            <person name="Hernandez J."/>
            <person name="Rabbinowitsch E."/>
            <person name="Steffen D."/>
            <person name="Sanders M."/>
            <person name="Ma J."/>
            <person name="Kohara Y."/>
            <person name="Sharp S."/>
            <person name="Simmonds M.N."/>
            <person name="Spiegler S."/>
            <person name="Tivey A."/>
            <person name="Sugano S."/>
            <person name="White B."/>
            <person name="Walker D."/>
            <person name="Woodward J.R."/>
            <person name="Winckler T."/>
            <person name="Tanaka Y."/>
            <person name="Shaulsky G."/>
            <person name="Schleicher M."/>
            <person name="Weinstock G.M."/>
            <person name="Rosenthal A."/>
            <person name="Cox E.C."/>
            <person name="Chisholm R.L."/>
            <person name="Gibbs R.A."/>
            <person name="Loomis W.F."/>
            <person name="Platzer M."/>
            <person name="Kay R.R."/>
            <person name="Williams J.G."/>
            <person name="Dear P.H."/>
            <person name="Noegel A.A."/>
            <person name="Barrell B.G."/>
            <person name="Kuspa A."/>
        </authorList>
    </citation>
    <scope>NUCLEOTIDE SEQUENCE [LARGE SCALE GENOMIC DNA]</scope>
    <source>
        <strain>AX4</strain>
    </source>
</reference>
<name>Y8923_DICDI</name>
<evidence type="ECO:0000256" key="1">
    <source>
        <dbReference type="SAM" id="MobiDB-lite"/>
    </source>
</evidence>
<evidence type="ECO:0000305" key="2"/>
<organism>
    <name type="scientific">Dictyostelium discoideum</name>
    <name type="common">Social amoeba</name>
    <dbReference type="NCBI Taxonomy" id="44689"/>
    <lineage>
        <taxon>Eukaryota</taxon>
        <taxon>Amoebozoa</taxon>
        <taxon>Evosea</taxon>
        <taxon>Eumycetozoa</taxon>
        <taxon>Dictyostelia</taxon>
        <taxon>Dictyosteliales</taxon>
        <taxon>Dictyosteliaceae</taxon>
        <taxon>Dictyostelium</taxon>
    </lineage>
</organism>
<accession>Q54FZ8</accession>
<accession>Q54FZ7</accession>
<proteinExistence type="predicted"/>
<dbReference type="EMBL" id="AAFI02000164">
    <property type="protein sequence ID" value="EAL62118.1"/>
    <property type="status" value="ALT_SEQ"/>
    <property type="molecule type" value="Genomic_DNA"/>
</dbReference>
<dbReference type="EMBL" id="AAFI02000164">
    <property type="protein sequence ID" value="EAL62181.1"/>
    <property type="status" value="ALT_SEQ"/>
    <property type="molecule type" value="Genomic_DNA"/>
</dbReference>
<dbReference type="RefSeq" id="XP_635619.1">
    <property type="nucleotide sequence ID" value="XM_630527.1"/>
</dbReference>
<dbReference type="RefSeq" id="XP_635620.1">
    <property type="nucleotide sequence ID" value="XM_630528.1"/>
</dbReference>
<dbReference type="STRING" id="44689.Q54FZ8"/>
<dbReference type="PaxDb" id="44689-DDB0216167"/>
<dbReference type="EnsemblProtists" id="EAL62118">
    <property type="protein sequence ID" value="EAL62118"/>
    <property type="gene ID" value="DDB_G0290515"/>
</dbReference>
<dbReference type="EnsemblProtists" id="EAL62181">
    <property type="protein sequence ID" value="EAL62181"/>
    <property type="gene ID" value="DDB_G0290641"/>
</dbReference>
<dbReference type="GeneID" id="8627692"/>
<dbReference type="KEGG" id="ddi:DDB_G0290515"/>
<dbReference type="KEGG" id="ddi:DDB_G0290641"/>
<dbReference type="dictyBase" id="DDB_G0290641"/>
<dbReference type="VEuPathDB" id="AmoebaDB:DDB_G0290515"/>
<dbReference type="VEuPathDB" id="AmoebaDB:DDB_G0290641"/>
<dbReference type="eggNOG" id="ENOG502RSR9">
    <property type="taxonomic scope" value="Eukaryota"/>
</dbReference>
<dbReference type="InParanoid" id="Q54FZ8"/>
<dbReference type="PhylomeDB" id="Q54FZ8"/>
<dbReference type="Reactome" id="R-DDI-983168">
    <property type="pathway name" value="Antigen processing: Ubiquitination &amp; Proteasome degradation"/>
</dbReference>
<dbReference type="PRO" id="PR:Q54FZ8"/>
<dbReference type="Proteomes" id="UP000002195">
    <property type="component" value="Chromosome 5"/>
</dbReference>
<dbReference type="GO" id="GO:0016887">
    <property type="term" value="F:ATP hydrolysis activity"/>
    <property type="evidence" value="ECO:0007669"/>
    <property type="project" value="InterPro"/>
</dbReference>
<dbReference type="GO" id="GO:0004842">
    <property type="term" value="F:ubiquitin-protein transferase activity"/>
    <property type="evidence" value="ECO:0007669"/>
    <property type="project" value="InterPro"/>
</dbReference>
<dbReference type="InterPro" id="IPR027417">
    <property type="entry name" value="P-loop_NTPase"/>
</dbReference>
<dbReference type="InterPro" id="IPR031248">
    <property type="entry name" value="RNF213"/>
</dbReference>
<dbReference type="PANTHER" id="PTHR22605">
    <property type="entry name" value="RZ-TYPE DOMAIN-CONTAINING PROTEIN"/>
    <property type="match status" value="1"/>
</dbReference>
<dbReference type="PANTHER" id="PTHR22605:SF1">
    <property type="entry name" value="RZ-TYPE DOMAIN-CONTAINING PROTEIN"/>
    <property type="match status" value="1"/>
</dbReference>
<dbReference type="SUPFAM" id="SSF52540">
    <property type="entry name" value="P-loop containing nucleoside triphosphate hydrolases"/>
    <property type="match status" value="2"/>
</dbReference>
<gene>
    <name type="ORF">DDB_G0290641</name>
</gene>
<protein>
    <recommendedName>
        <fullName>Putative uncharacterized transmembrane protein DDB_G0290641</fullName>
    </recommendedName>
</protein>